<comment type="function">
    <text>Plays a fundamental role in microtubule-organizing center structure and function.</text>
</comment>
<comment type="subcellular location">
    <subcellularLocation>
        <location evidence="1">Cytoplasm</location>
        <location evidence="1">Cytoskeleton</location>
        <location evidence="1">Microtubule organizing center</location>
    </subcellularLocation>
</comment>
<comment type="similarity">
    <text evidence="4">Belongs to the centrin family.</text>
</comment>
<feature type="chain" id="PRO_0000073570" description="Caltractin">
    <location>
        <begin position="1"/>
        <end position="167"/>
    </location>
</feature>
<feature type="domain" description="EF-hand 1" evidence="2">
    <location>
        <begin position="22"/>
        <end position="57"/>
    </location>
</feature>
<feature type="domain" description="EF-hand 2" evidence="2">
    <location>
        <begin position="58"/>
        <end position="93"/>
    </location>
</feature>
<feature type="domain" description="EF-hand 3" evidence="2">
    <location>
        <begin position="95"/>
        <end position="130"/>
    </location>
</feature>
<feature type="domain" description="EF-hand 4" evidence="2">
    <location>
        <begin position="131"/>
        <end position="166"/>
    </location>
</feature>
<feature type="region of interest" description="Disordered" evidence="3">
    <location>
        <begin position="1"/>
        <end position="23"/>
    </location>
</feature>
<feature type="compositionally biased region" description="Basic residues" evidence="3">
    <location>
        <begin position="1"/>
        <end position="18"/>
    </location>
</feature>
<feature type="binding site" evidence="2">
    <location>
        <position position="35"/>
    </location>
    <ligand>
        <name>Ca(2+)</name>
        <dbReference type="ChEBI" id="CHEBI:29108"/>
        <label>1</label>
    </ligand>
</feature>
<feature type="binding site" evidence="2">
    <location>
        <position position="37"/>
    </location>
    <ligand>
        <name>Ca(2+)</name>
        <dbReference type="ChEBI" id="CHEBI:29108"/>
        <label>1</label>
    </ligand>
</feature>
<feature type="binding site" evidence="2">
    <location>
        <position position="39"/>
    </location>
    <ligand>
        <name>Ca(2+)</name>
        <dbReference type="ChEBI" id="CHEBI:29108"/>
        <label>1</label>
    </ligand>
</feature>
<feature type="binding site" evidence="2">
    <location>
        <position position="41"/>
    </location>
    <ligand>
        <name>Ca(2+)</name>
        <dbReference type="ChEBI" id="CHEBI:29108"/>
        <label>1</label>
    </ligand>
</feature>
<feature type="binding site" evidence="2">
    <location>
        <position position="46"/>
    </location>
    <ligand>
        <name>Ca(2+)</name>
        <dbReference type="ChEBI" id="CHEBI:29108"/>
        <label>1</label>
    </ligand>
</feature>
<feature type="binding site" evidence="2">
    <location>
        <position position="71"/>
    </location>
    <ligand>
        <name>Ca(2+)</name>
        <dbReference type="ChEBI" id="CHEBI:29108"/>
        <label>2</label>
    </ligand>
</feature>
<feature type="binding site" evidence="2">
    <location>
        <position position="73"/>
    </location>
    <ligand>
        <name>Ca(2+)</name>
        <dbReference type="ChEBI" id="CHEBI:29108"/>
        <label>2</label>
    </ligand>
</feature>
<feature type="binding site" evidence="2">
    <location>
        <position position="75"/>
    </location>
    <ligand>
        <name>Ca(2+)</name>
        <dbReference type="ChEBI" id="CHEBI:29108"/>
        <label>2</label>
    </ligand>
</feature>
<feature type="binding site" evidence="2">
    <location>
        <position position="82"/>
    </location>
    <ligand>
        <name>Ca(2+)</name>
        <dbReference type="ChEBI" id="CHEBI:29108"/>
        <label>2</label>
    </ligand>
</feature>
<feature type="binding site" evidence="2">
    <location>
        <position position="108"/>
    </location>
    <ligand>
        <name>Ca(2+)</name>
        <dbReference type="ChEBI" id="CHEBI:29108"/>
        <label>3</label>
    </ligand>
</feature>
<feature type="binding site" evidence="2">
    <location>
        <position position="110"/>
    </location>
    <ligand>
        <name>Ca(2+)</name>
        <dbReference type="ChEBI" id="CHEBI:29108"/>
        <label>3</label>
    </ligand>
</feature>
<feature type="binding site" evidence="2">
    <location>
        <position position="112"/>
    </location>
    <ligand>
        <name>Ca(2+)</name>
        <dbReference type="ChEBI" id="CHEBI:29108"/>
        <label>3</label>
    </ligand>
</feature>
<feature type="binding site" evidence="2">
    <location>
        <position position="114"/>
    </location>
    <ligand>
        <name>Ca(2+)</name>
        <dbReference type="ChEBI" id="CHEBI:29108"/>
        <label>3</label>
    </ligand>
</feature>
<feature type="binding site" evidence="2">
    <location>
        <position position="119"/>
    </location>
    <ligand>
        <name>Ca(2+)</name>
        <dbReference type="ChEBI" id="CHEBI:29108"/>
        <label>3</label>
    </ligand>
</feature>
<feature type="binding site" evidence="2">
    <location>
        <position position="144"/>
    </location>
    <ligand>
        <name>Ca(2+)</name>
        <dbReference type="ChEBI" id="CHEBI:29108"/>
        <label>4</label>
    </ligand>
</feature>
<feature type="binding site" evidence="2">
    <location>
        <position position="146"/>
    </location>
    <ligand>
        <name>Ca(2+)</name>
        <dbReference type="ChEBI" id="CHEBI:29108"/>
        <label>4</label>
    </ligand>
</feature>
<feature type="binding site" evidence="2">
    <location>
        <position position="148"/>
    </location>
    <ligand>
        <name>Ca(2+)</name>
        <dbReference type="ChEBI" id="CHEBI:29108"/>
        <label>4</label>
    </ligand>
</feature>
<feature type="binding site" evidence="2">
    <location>
        <position position="150"/>
    </location>
    <ligand>
        <name>Ca(2+)</name>
        <dbReference type="ChEBI" id="CHEBI:29108"/>
        <label>4</label>
    </ligand>
</feature>
<feature type="binding site" evidence="2">
    <location>
        <position position="155"/>
    </location>
    <ligand>
        <name>Ca(2+)</name>
        <dbReference type="ChEBI" id="CHEBI:29108"/>
        <label>4</label>
    </ligand>
</feature>
<keyword id="KW-0106">Calcium</keyword>
<keyword id="KW-0131">Cell cycle</keyword>
<keyword id="KW-0132">Cell division</keyword>
<keyword id="KW-0963">Cytoplasm</keyword>
<keyword id="KW-0206">Cytoskeleton</keyword>
<keyword id="KW-0479">Metal-binding</keyword>
<keyword id="KW-0498">Mitosis</keyword>
<keyword id="KW-0677">Repeat</keyword>
<proteinExistence type="evidence at transcript level"/>
<sequence length="167" mass="19245">MSSARTVRKDKPRGRHHGLTQQKRQEIKEAFELFDTDGSGTIDAKELNVAMRALGFEMTEEQINQMIADVDKDGSGAIDFDEFCHMMTAKIGERDTKEELMKAFRIIDQDNNGKISPEDIQRIAKELGENFTVKDIQDMIEEADRDRDGEVNVEEFLRMMKRTSYAY</sequence>
<organism>
    <name type="scientific">Atriplex nummularia</name>
    <name type="common">Old man saltbush</name>
    <name type="synonym">Atriplex johnstonii</name>
    <dbReference type="NCBI Taxonomy" id="3553"/>
    <lineage>
        <taxon>Eukaryota</taxon>
        <taxon>Viridiplantae</taxon>
        <taxon>Streptophyta</taxon>
        <taxon>Embryophyta</taxon>
        <taxon>Tracheophyta</taxon>
        <taxon>Spermatophyta</taxon>
        <taxon>Magnoliopsida</taxon>
        <taxon>eudicotyledons</taxon>
        <taxon>Gunneridae</taxon>
        <taxon>Pentapetalae</taxon>
        <taxon>Caryophyllales</taxon>
        <taxon>Chenopodiaceae</taxon>
        <taxon>Chenopodioideae</taxon>
        <taxon>Atripliceae</taxon>
        <taxon>Atriplex</taxon>
    </lineage>
</organism>
<dbReference type="EMBL" id="M90970">
    <property type="status" value="NOT_ANNOTATED_CDS"/>
    <property type="molecule type" value="mRNA"/>
</dbReference>
<dbReference type="SMR" id="P41210"/>
<dbReference type="GO" id="GO:0005737">
    <property type="term" value="C:cytoplasm"/>
    <property type="evidence" value="ECO:0007669"/>
    <property type="project" value="UniProtKB-KW"/>
</dbReference>
<dbReference type="GO" id="GO:0005815">
    <property type="term" value="C:microtubule organizing center"/>
    <property type="evidence" value="ECO:0007669"/>
    <property type="project" value="UniProtKB-SubCell"/>
</dbReference>
<dbReference type="GO" id="GO:0005509">
    <property type="term" value="F:calcium ion binding"/>
    <property type="evidence" value="ECO:0007669"/>
    <property type="project" value="InterPro"/>
</dbReference>
<dbReference type="GO" id="GO:0051301">
    <property type="term" value="P:cell division"/>
    <property type="evidence" value="ECO:0007669"/>
    <property type="project" value="UniProtKB-KW"/>
</dbReference>
<dbReference type="CDD" id="cd00051">
    <property type="entry name" value="EFh"/>
    <property type="match status" value="2"/>
</dbReference>
<dbReference type="FunFam" id="1.10.238.10:FF:000268">
    <property type="entry name" value="Centrin 2"/>
    <property type="match status" value="1"/>
</dbReference>
<dbReference type="FunFam" id="1.10.238.10:FF:000256">
    <property type="entry name" value="probable calcium-binding protein CML20"/>
    <property type="match status" value="1"/>
</dbReference>
<dbReference type="Gene3D" id="1.10.238.10">
    <property type="entry name" value="EF-hand"/>
    <property type="match status" value="2"/>
</dbReference>
<dbReference type="InterPro" id="IPR050145">
    <property type="entry name" value="Centrin_CML-like"/>
</dbReference>
<dbReference type="InterPro" id="IPR011992">
    <property type="entry name" value="EF-hand-dom_pair"/>
</dbReference>
<dbReference type="InterPro" id="IPR018247">
    <property type="entry name" value="EF_Hand_1_Ca_BS"/>
</dbReference>
<dbReference type="InterPro" id="IPR002048">
    <property type="entry name" value="EF_hand_dom"/>
</dbReference>
<dbReference type="PANTHER" id="PTHR23050">
    <property type="entry name" value="CALCIUM BINDING PROTEIN"/>
    <property type="match status" value="1"/>
</dbReference>
<dbReference type="Pfam" id="PF13499">
    <property type="entry name" value="EF-hand_7"/>
    <property type="match status" value="2"/>
</dbReference>
<dbReference type="SMART" id="SM00054">
    <property type="entry name" value="EFh"/>
    <property type="match status" value="4"/>
</dbReference>
<dbReference type="SUPFAM" id="SSF47473">
    <property type="entry name" value="EF-hand"/>
    <property type="match status" value="1"/>
</dbReference>
<dbReference type="PROSITE" id="PS00018">
    <property type="entry name" value="EF_HAND_1"/>
    <property type="match status" value="4"/>
</dbReference>
<dbReference type="PROSITE" id="PS50222">
    <property type="entry name" value="EF_HAND_2"/>
    <property type="match status" value="4"/>
</dbReference>
<name>CATR_ATRNU</name>
<reference key="1">
    <citation type="journal article" date="1992" name="Plant Physiol.">
        <title>An Atriplex nummularia cDNA with sequence relatedness to the algal caltractin gene.</title>
        <authorList>
            <person name="Zhu J.-K."/>
            <person name="Bressan R.A."/>
            <person name="Hasegawa P.M."/>
        </authorList>
    </citation>
    <scope>NUCLEOTIDE SEQUENCE [MRNA]</scope>
</reference>
<protein>
    <recommendedName>
        <fullName>Caltractin</fullName>
    </recommendedName>
    <alternativeName>
        <fullName>Centrin</fullName>
    </alternativeName>
</protein>
<accession>P41210</accession>
<evidence type="ECO:0000250" key="1">
    <source>
        <dbReference type="UniProtKB" id="Q12798"/>
    </source>
</evidence>
<evidence type="ECO:0000255" key="2">
    <source>
        <dbReference type="PROSITE-ProRule" id="PRU00448"/>
    </source>
</evidence>
<evidence type="ECO:0000256" key="3">
    <source>
        <dbReference type="SAM" id="MobiDB-lite"/>
    </source>
</evidence>
<evidence type="ECO:0000305" key="4"/>